<reference key="1">
    <citation type="journal article" date="2004" name="Nucleic Acids Res.">
        <title>Whole genome comparisons of serotype 4b and 1/2a strains of the food-borne pathogen Listeria monocytogenes reveal new insights into the core genome components of this species.</title>
        <authorList>
            <person name="Nelson K.E."/>
            <person name="Fouts D.E."/>
            <person name="Mongodin E.F."/>
            <person name="Ravel J."/>
            <person name="DeBoy R.T."/>
            <person name="Kolonay J.F."/>
            <person name="Rasko D.A."/>
            <person name="Angiuoli S.V."/>
            <person name="Gill S.R."/>
            <person name="Paulsen I.T."/>
            <person name="Peterson J.D."/>
            <person name="White O."/>
            <person name="Nelson W.C."/>
            <person name="Nierman W.C."/>
            <person name="Beanan M.J."/>
            <person name="Brinkac L.M."/>
            <person name="Daugherty S.C."/>
            <person name="Dodson R.J."/>
            <person name="Durkin A.S."/>
            <person name="Madupu R."/>
            <person name="Haft D.H."/>
            <person name="Selengut J."/>
            <person name="Van Aken S.E."/>
            <person name="Khouri H.M."/>
            <person name="Fedorova N."/>
            <person name="Forberger H.A."/>
            <person name="Tran B."/>
            <person name="Kathariou S."/>
            <person name="Wonderling L.D."/>
            <person name="Uhlich G.A."/>
            <person name="Bayles D.O."/>
            <person name="Luchansky J.B."/>
            <person name="Fraser C.M."/>
        </authorList>
    </citation>
    <scope>NUCLEOTIDE SEQUENCE [LARGE SCALE GENOMIC DNA]</scope>
    <source>
        <strain>F2365</strain>
    </source>
</reference>
<comment type="function">
    <text evidence="1">Catalyzes the conversion of heme O to heme A by two successive hydroxylations of the methyl group at C8. The first hydroxylation forms heme I, the second hydroxylation results in an unstable dihydroxymethyl group, which spontaneously dehydrates, resulting in the formyl group of heme A.</text>
</comment>
<comment type="catalytic activity">
    <reaction evidence="1">
        <text>Fe(II)-heme o + 2 A + H2O = Fe(II)-heme a + 2 AH2</text>
        <dbReference type="Rhea" id="RHEA:63388"/>
        <dbReference type="ChEBI" id="CHEBI:13193"/>
        <dbReference type="ChEBI" id="CHEBI:15377"/>
        <dbReference type="ChEBI" id="CHEBI:17499"/>
        <dbReference type="ChEBI" id="CHEBI:60530"/>
        <dbReference type="ChEBI" id="CHEBI:61715"/>
        <dbReference type="EC" id="1.17.99.9"/>
    </reaction>
    <physiologicalReaction direction="left-to-right" evidence="1">
        <dbReference type="Rhea" id="RHEA:63389"/>
    </physiologicalReaction>
</comment>
<comment type="cofactor">
    <cofactor evidence="1">
        <name>heme b</name>
        <dbReference type="ChEBI" id="CHEBI:60344"/>
    </cofactor>
</comment>
<comment type="pathway">
    <text evidence="1">Porphyrin-containing compound metabolism; heme A biosynthesis; heme A from heme O: step 1/1.</text>
</comment>
<comment type="subunit">
    <text evidence="1">Interacts with CtaB.</text>
</comment>
<comment type="subcellular location">
    <subcellularLocation>
        <location evidence="1">Cell membrane</location>
        <topology evidence="1">Multi-pass membrane protein</topology>
    </subcellularLocation>
</comment>
<comment type="domain">
    <text evidence="1">The N-half (TM1-TM4) and C-half (TM5-TM8) domains are connected by an intracellular loop. Each domain is formed from four-helix bundles and they align in a pseudo twofold symmetry manner. The N-half domain is the substrate-heme O binding domain and the C-half domain is the cofactor heme B binding domain.</text>
</comment>
<comment type="domain">
    <text evidence="1">The cysteines of disulfide bond Cys-35 and Cys-42 may be involved in transfer of reducing equivalents from quinol in the membrane to the active site of the enzyme.</text>
</comment>
<comment type="similarity">
    <text evidence="1">Belongs to the COX15/CtaA family. Type 1 subfamily.</text>
</comment>
<gene>
    <name evidence="1" type="primary">ctaA</name>
    <name type="ordered locus">LMOf2365_2089</name>
</gene>
<name>CTAA_LISMF</name>
<proteinExistence type="inferred from homology"/>
<evidence type="ECO:0000255" key="1">
    <source>
        <dbReference type="HAMAP-Rule" id="MF_01664"/>
    </source>
</evidence>
<sequence>MKKFLKVWSVLTIICMTVVVFGGALVTKTGSADGCGNSWPLCNGQLVRLTDVTPEKLIEFMHRMTTGISSIFVIVLAICAWIYMKNRRETKPLAIIAVLFLIIQALMGMAAVVWGQNPYIMALHFGISIICYASIVLLALMIFEVDRKFDARNLVMGTKLRINIYALTIYTYLAVYTGALVRHEKASMAVPVWPFENGHFIMPTSVQDYVQYFHRLAAFILIVWLLYVTWLVFRDYRRYRVLTFSMVLSLVFIALQAVTGALSVYTGVNLYIALAHSLIITMLFALLCYLCLLASRSKSNRLRIK</sequence>
<organism>
    <name type="scientific">Listeria monocytogenes serotype 4b (strain F2365)</name>
    <dbReference type="NCBI Taxonomy" id="265669"/>
    <lineage>
        <taxon>Bacteria</taxon>
        <taxon>Bacillati</taxon>
        <taxon>Bacillota</taxon>
        <taxon>Bacilli</taxon>
        <taxon>Bacillales</taxon>
        <taxon>Listeriaceae</taxon>
        <taxon>Listeria</taxon>
    </lineage>
</organism>
<feature type="chain" id="PRO_0000348983" description="Heme A synthase">
    <location>
        <begin position="1"/>
        <end position="305"/>
    </location>
</feature>
<feature type="topological domain" description="Cytoplasmic" evidence="1">
    <location>
        <begin position="1"/>
        <end position="6"/>
    </location>
</feature>
<feature type="transmembrane region" description="Helical" evidence="1">
    <location>
        <begin position="7"/>
        <end position="27"/>
    </location>
</feature>
<feature type="topological domain" description="Extracellular" evidence="1">
    <location>
        <begin position="28"/>
        <end position="63"/>
    </location>
</feature>
<feature type="transmembrane region" description="Helical" evidence="1">
    <location>
        <begin position="64"/>
        <end position="84"/>
    </location>
</feature>
<feature type="topological domain" description="Cytoplasmic" evidence="1">
    <location>
        <begin position="85"/>
        <end position="92"/>
    </location>
</feature>
<feature type="transmembrane region" description="Helical" evidence="1">
    <location>
        <begin position="93"/>
        <end position="113"/>
    </location>
</feature>
<feature type="topological domain" description="Extracellular" evidence="1">
    <location>
        <begin position="114"/>
        <end position="122"/>
    </location>
</feature>
<feature type="transmembrane region" description="Helical" evidence="1">
    <location>
        <begin position="123"/>
        <end position="143"/>
    </location>
</feature>
<feature type="topological domain" description="Cytoplasmic" evidence="1">
    <location>
        <begin position="144"/>
        <end position="160"/>
    </location>
</feature>
<feature type="transmembrane region" description="Helical" evidence="1">
    <location>
        <begin position="161"/>
        <end position="181"/>
    </location>
</feature>
<feature type="topological domain" description="Extracellular" evidence="1">
    <location>
        <begin position="182"/>
        <end position="212"/>
    </location>
</feature>
<feature type="transmembrane region" description="Helical" evidence="1">
    <location>
        <begin position="213"/>
        <end position="233"/>
    </location>
</feature>
<feature type="topological domain" description="Cytoplasmic" evidence="1">
    <location>
        <begin position="234"/>
        <end position="240"/>
    </location>
</feature>
<feature type="transmembrane region" description="Helical" evidence="1">
    <location>
        <begin position="241"/>
        <end position="261"/>
    </location>
</feature>
<feature type="topological domain" description="Extracellular" evidence="1">
    <location>
        <begin position="262"/>
        <end position="271"/>
    </location>
</feature>
<feature type="transmembrane region" description="Helical" evidence="1">
    <location>
        <begin position="272"/>
        <end position="292"/>
    </location>
</feature>
<feature type="topological domain" description="Cytoplasmic" evidence="1">
    <location>
        <begin position="293"/>
        <end position="305"/>
    </location>
</feature>
<feature type="active site" evidence="1">
    <location>
        <position position="59"/>
    </location>
</feature>
<feature type="binding site" description="axial binding residue" evidence="1">
    <location>
        <position position="62"/>
    </location>
    <ligand>
        <name>heme o</name>
        <dbReference type="ChEBI" id="CHEBI:24480"/>
    </ligand>
    <ligandPart>
        <name>Fe</name>
        <dbReference type="ChEBI" id="CHEBI:18248"/>
    </ligandPart>
</feature>
<feature type="binding site" description="axial binding residue" evidence="1">
    <location>
        <position position="124"/>
    </location>
    <ligand>
        <name>heme o</name>
        <dbReference type="ChEBI" id="CHEBI:24480"/>
    </ligand>
    <ligandPart>
        <name>Fe</name>
        <dbReference type="ChEBI" id="CHEBI:18248"/>
    </ligandPart>
</feature>
<feature type="binding site" description="axial binding residue" evidence="1">
    <location>
        <position position="214"/>
    </location>
    <ligand>
        <name>heme b</name>
        <dbReference type="ChEBI" id="CHEBI:60344"/>
    </ligand>
    <ligandPart>
        <name>Fe</name>
        <dbReference type="ChEBI" id="CHEBI:18248"/>
    </ligandPart>
</feature>
<feature type="binding site" description="axial binding residue" evidence="1">
    <location>
        <position position="276"/>
    </location>
    <ligand>
        <name>heme b</name>
        <dbReference type="ChEBI" id="CHEBI:60344"/>
    </ligand>
    <ligandPart>
        <name>Fe</name>
        <dbReference type="ChEBI" id="CHEBI:18248"/>
    </ligandPart>
</feature>
<feature type="disulfide bond" description="Essential for catalytic activity" evidence="1">
    <location>
        <begin position="35"/>
        <end position="42"/>
    </location>
</feature>
<accession>Q71XV6</accession>
<protein>
    <recommendedName>
        <fullName evidence="1">Heme A synthase</fullName>
        <shortName evidence="1">HAS</shortName>
        <ecNumber evidence="1">1.17.99.9</ecNumber>
    </recommendedName>
    <alternativeName>
        <fullName evidence="1">Cytochrome aa3-controlling protein</fullName>
    </alternativeName>
</protein>
<dbReference type="EC" id="1.17.99.9" evidence="1"/>
<dbReference type="EMBL" id="AE017262">
    <property type="protein sequence ID" value="AAT04859.1"/>
    <property type="molecule type" value="Genomic_DNA"/>
</dbReference>
<dbReference type="RefSeq" id="WP_003723941.1">
    <property type="nucleotide sequence ID" value="NC_002973.6"/>
</dbReference>
<dbReference type="SMR" id="Q71XV6"/>
<dbReference type="KEGG" id="lmf:LMOf2365_2089"/>
<dbReference type="HOGENOM" id="CLU_041525_3_1_9"/>
<dbReference type="UniPathway" id="UPA00269">
    <property type="reaction ID" value="UER00713"/>
</dbReference>
<dbReference type="GO" id="GO:0005886">
    <property type="term" value="C:plasma membrane"/>
    <property type="evidence" value="ECO:0007669"/>
    <property type="project" value="UniProtKB-SubCell"/>
</dbReference>
<dbReference type="GO" id="GO:0046872">
    <property type="term" value="F:metal ion binding"/>
    <property type="evidence" value="ECO:0007669"/>
    <property type="project" value="UniProtKB-KW"/>
</dbReference>
<dbReference type="GO" id="GO:0016653">
    <property type="term" value="F:oxidoreductase activity, acting on NAD(P)H, heme protein as acceptor"/>
    <property type="evidence" value="ECO:0007669"/>
    <property type="project" value="InterPro"/>
</dbReference>
<dbReference type="GO" id="GO:0006784">
    <property type="term" value="P:heme A biosynthetic process"/>
    <property type="evidence" value="ECO:0007669"/>
    <property type="project" value="UniProtKB-UniRule"/>
</dbReference>
<dbReference type="HAMAP" id="MF_01664">
    <property type="entry name" value="HemeA_synth_type1"/>
    <property type="match status" value="1"/>
</dbReference>
<dbReference type="InterPro" id="IPR003780">
    <property type="entry name" value="COX15/CtaA_fam"/>
</dbReference>
<dbReference type="InterPro" id="IPR050450">
    <property type="entry name" value="COX15/CtaA_HemeA_synthase"/>
</dbReference>
<dbReference type="InterPro" id="IPR023755">
    <property type="entry name" value="HemeA_Synthase_type1"/>
</dbReference>
<dbReference type="PANTHER" id="PTHR35457">
    <property type="entry name" value="HEME A SYNTHASE"/>
    <property type="match status" value="1"/>
</dbReference>
<dbReference type="PANTHER" id="PTHR35457:SF1">
    <property type="entry name" value="HEME A SYNTHASE"/>
    <property type="match status" value="1"/>
</dbReference>
<dbReference type="Pfam" id="PF02628">
    <property type="entry name" value="COX15-CtaA"/>
    <property type="match status" value="1"/>
</dbReference>
<keyword id="KW-1003">Cell membrane</keyword>
<keyword id="KW-1015">Disulfide bond</keyword>
<keyword id="KW-0350">Heme biosynthesis</keyword>
<keyword id="KW-0408">Iron</keyword>
<keyword id="KW-0472">Membrane</keyword>
<keyword id="KW-0479">Metal-binding</keyword>
<keyword id="KW-0560">Oxidoreductase</keyword>
<keyword id="KW-0812">Transmembrane</keyword>
<keyword id="KW-1133">Transmembrane helix</keyword>